<name>TRUB_MYCSJ</name>
<organism>
    <name type="scientific">Mycobacterium sp. (strain JLS)</name>
    <dbReference type="NCBI Taxonomy" id="164757"/>
    <lineage>
        <taxon>Bacteria</taxon>
        <taxon>Bacillati</taxon>
        <taxon>Actinomycetota</taxon>
        <taxon>Actinomycetes</taxon>
        <taxon>Mycobacteriales</taxon>
        <taxon>Mycobacteriaceae</taxon>
        <taxon>Mycobacterium</taxon>
    </lineage>
</organism>
<proteinExistence type="inferred from homology"/>
<feature type="chain" id="PRO_1000149826" description="tRNA pseudouridine synthase B">
    <location>
        <begin position="1"/>
        <end position="297"/>
    </location>
</feature>
<feature type="active site" description="Nucleophile" evidence="1">
    <location>
        <position position="44"/>
    </location>
</feature>
<evidence type="ECO:0000255" key="1">
    <source>
        <dbReference type="HAMAP-Rule" id="MF_01080"/>
    </source>
</evidence>
<comment type="function">
    <text evidence="1">Responsible for synthesis of pseudouridine from uracil-55 in the psi GC loop of transfer RNAs.</text>
</comment>
<comment type="catalytic activity">
    <reaction evidence="1">
        <text>uridine(55) in tRNA = pseudouridine(55) in tRNA</text>
        <dbReference type="Rhea" id="RHEA:42532"/>
        <dbReference type="Rhea" id="RHEA-COMP:10101"/>
        <dbReference type="Rhea" id="RHEA-COMP:10102"/>
        <dbReference type="ChEBI" id="CHEBI:65314"/>
        <dbReference type="ChEBI" id="CHEBI:65315"/>
        <dbReference type="EC" id="5.4.99.25"/>
    </reaction>
</comment>
<comment type="similarity">
    <text evidence="1">Belongs to the pseudouridine synthase TruB family. Type 1 subfamily.</text>
</comment>
<reference key="1">
    <citation type="submission" date="2007-02" db="EMBL/GenBank/DDBJ databases">
        <title>Complete sequence of Mycobacterium sp. JLS.</title>
        <authorList>
            <consortium name="US DOE Joint Genome Institute"/>
            <person name="Copeland A."/>
            <person name="Lucas S."/>
            <person name="Lapidus A."/>
            <person name="Barry K."/>
            <person name="Detter J.C."/>
            <person name="Glavina del Rio T."/>
            <person name="Hammon N."/>
            <person name="Israni S."/>
            <person name="Dalin E."/>
            <person name="Tice H."/>
            <person name="Pitluck S."/>
            <person name="Chain P."/>
            <person name="Malfatti S."/>
            <person name="Shin M."/>
            <person name="Vergez L."/>
            <person name="Schmutz J."/>
            <person name="Larimer F."/>
            <person name="Land M."/>
            <person name="Hauser L."/>
            <person name="Kyrpides N."/>
            <person name="Mikhailova N."/>
            <person name="Miller C.D."/>
            <person name="Anderson A.J."/>
            <person name="Sims R.C."/>
            <person name="Richardson P."/>
        </authorList>
    </citation>
    <scope>NUCLEOTIDE SEQUENCE [LARGE SCALE GENOMIC DNA]</scope>
    <source>
        <strain>JLS</strain>
    </source>
</reference>
<accession>A3PY88</accession>
<sequence>MSGAGVGGGIVIVDKPAGMTSHDVVGRCRRIFGTRKVGHAGTLDPMATGVLVVGIDRATKLLGLLTATDKSYEATIRLGQTTTTEDAEGDVVETTPATGITDEQIGHAVAALRGEIDQVPSAVSAIKVGGQRAYKLAREGQTVELAARRVRIDRFEVLAIRRVDGFVDVDVAVDCSSGTYIRALARDVGVTLGVGGHLTLLRRTRVGRFGLDEAYPLDALADEPRLSHSLDEACLLSFPRRDLTPAEAESTRHGRALAPAGIDGVYAAAAPDGSVLALLEDGPQRTKSVVVLRPATL</sequence>
<protein>
    <recommendedName>
        <fullName evidence="1">tRNA pseudouridine synthase B</fullName>
        <ecNumber evidence="1">5.4.99.25</ecNumber>
    </recommendedName>
    <alternativeName>
        <fullName evidence="1">tRNA pseudouridine(55) synthase</fullName>
        <shortName evidence="1">Psi55 synthase</shortName>
    </alternativeName>
    <alternativeName>
        <fullName evidence="1">tRNA pseudouridylate synthase</fullName>
    </alternativeName>
    <alternativeName>
        <fullName evidence="1">tRNA-uridine isomerase</fullName>
    </alternativeName>
</protein>
<gene>
    <name evidence="1" type="primary">truB</name>
    <name type="ordered locus">Mjls_2078</name>
</gene>
<dbReference type="EC" id="5.4.99.25" evidence="1"/>
<dbReference type="EMBL" id="CP000580">
    <property type="protein sequence ID" value="ABN97865.1"/>
    <property type="molecule type" value="Genomic_DNA"/>
</dbReference>
<dbReference type="SMR" id="A3PY88"/>
<dbReference type="KEGG" id="mjl:Mjls_2078"/>
<dbReference type="HOGENOM" id="CLU_032087_0_0_11"/>
<dbReference type="BioCyc" id="MSP164757:G1G8C-2097-MONOMER"/>
<dbReference type="GO" id="GO:0003723">
    <property type="term" value="F:RNA binding"/>
    <property type="evidence" value="ECO:0007669"/>
    <property type="project" value="InterPro"/>
</dbReference>
<dbReference type="GO" id="GO:0160148">
    <property type="term" value="F:tRNA pseudouridine(55) synthase activity"/>
    <property type="evidence" value="ECO:0007669"/>
    <property type="project" value="UniProtKB-EC"/>
</dbReference>
<dbReference type="GO" id="GO:1990481">
    <property type="term" value="P:mRNA pseudouridine synthesis"/>
    <property type="evidence" value="ECO:0007669"/>
    <property type="project" value="TreeGrafter"/>
</dbReference>
<dbReference type="GO" id="GO:0031119">
    <property type="term" value="P:tRNA pseudouridine synthesis"/>
    <property type="evidence" value="ECO:0007669"/>
    <property type="project" value="UniProtKB-UniRule"/>
</dbReference>
<dbReference type="CDD" id="cd02573">
    <property type="entry name" value="PseudoU_synth_EcTruB"/>
    <property type="match status" value="1"/>
</dbReference>
<dbReference type="FunFam" id="3.30.2350.10:FF:000011">
    <property type="entry name" value="tRNA pseudouridine synthase B"/>
    <property type="match status" value="1"/>
</dbReference>
<dbReference type="Gene3D" id="3.30.2350.10">
    <property type="entry name" value="Pseudouridine synthase"/>
    <property type="match status" value="1"/>
</dbReference>
<dbReference type="Gene3D" id="2.30.130.10">
    <property type="entry name" value="PUA domain"/>
    <property type="match status" value="1"/>
</dbReference>
<dbReference type="HAMAP" id="MF_01080">
    <property type="entry name" value="TruB_bact"/>
    <property type="match status" value="1"/>
</dbReference>
<dbReference type="InterPro" id="IPR020103">
    <property type="entry name" value="PsdUridine_synth_cat_dom_sf"/>
</dbReference>
<dbReference type="InterPro" id="IPR002501">
    <property type="entry name" value="PsdUridine_synth_N"/>
</dbReference>
<dbReference type="InterPro" id="IPR015947">
    <property type="entry name" value="PUA-like_sf"/>
</dbReference>
<dbReference type="InterPro" id="IPR036974">
    <property type="entry name" value="PUA_sf"/>
</dbReference>
<dbReference type="InterPro" id="IPR015225">
    <property type="entry name" value="tRNA_psdUridine_synth_fam2_C"/>
</dbReference>
<dbReference type="InterPro" id="IPR014780">
    <property type="entry name" value="tRNA_psdUridine_synth_TruB"/>
</dbReference>
<dbReference type="InterPro" id="IPR032819">
    <property type="entry name" value="TruB_C"/>
</dbReference>
<dbReference type="NCBIfam" id="TIGR00431">
    <property type="entry name" value="TruB"/>
    <property type="match status" value="1"/>
</dbReference>
<dbReference type="PANTHER" id="PTHR13767:SF2">
    <property type="entry name" value="PSEUDOURIDYLATE SYNTHASE TRUB1"/>
    <property type="match status" value="1"/>
</dbReference>
<dbReference type="PANTHER" id="PTHR13767">
    <property type="entry name" value="TRNA-PSEUDOURIDINE SYNTHASE"/>
    <property type="match status" value="1"/>
</dbReference>
<dbReference type="Pfam" id="PF09142">
    <property type="entry name" value="TruB_C"/>
    <property type="match status" value="1"/>
</dbReference>
<dbReference type="Pfam" id="PF16198">
    <property type="entry name" value="TruB_C_2"/>
    <property type="match status" value="1"/>
</dbReference>
<dbReference type="Pfam" id="PF01509">
    <property type="entry name" value="TruB_N"/>
    <property type="match status" value="1"/>
</dbReference>
<dbReference type="SUPFAM" id="SSF55120">
    <property type="entry name" value="Pseudouridine synthase"/>
    <property type="match status" value="1"/>
</dbReference>
<dbReference type="SUPFAM" id="SSF88697">
    <property type="entry name" value="PUA domain-like"/>
    <property type="match status" value="1"/>
</dbReference>
<keyword id="KW-0413">Isomerase</keyword>
<keyword id="KW-0819">tRNA processing</keyword>